<sequence length="228" mass="25559">MSPSLTWHDVIGQEKEQPYFKDTLAYVAAERRAGKTIYPPQKDIFNAFRLTELDQVKVVILGQDPYHGPNQAHGLSFSVLPGVPAPPSLGNIYKELVTDIPGFQRPNHGFLQSWAEQGVLLLNTVLTVEAGKAHSHANLGWETFTDKVIAALNEHREGVIFMLWGSHAQKKGRIINTERHYILKAPHPSPLSAHRGFLGCKHFSQANQLLQQQNQQPIDWQPKLPAVE</sequence>
<evidence type="ECO:0000255" key="1">
    <source>
        <dbReference type="HAMAP-Rule" id="MF_00148"/>
    </source>
</evidence>
<evidence type="ECO:0000305" key="2"/>
<organism>
    <name type="scientific">Yersinia pestis</name>
    <dbReference type="NCBI Taxonomy" id="632"/>
    <lineage>
        <taxon>Bacteria</taxon>
        <taxon>Pseudomonadati</taxon>
        <taxon>Pseudomonadota</taxon>
        <taxon>Gammaproteobacteria</taxon>
        <taxon>Enterobacterales</taxon>
        <taxon>Yersiniaceae</taxon>
        <taxon>Yersinia</taxon>
    </lineage>
</organism>
<dbReference type="EC" id="3.2.2.27" evidence="1"/>
<dbReference type="EMBL" id="AL590842">
    <property type="protein sequence ID" value="CAL21323.1"/>
    <property type="molecule type" value="Genomic_DNA"/>
</dbReference>
<dbReference type="EMBL" id="AE009952">
    <property type="protein sequence ID" value="AAM84855.1"/>
    <property type="status" value="ALT_INIT"/>
    <property type="molecule type" value="Genomic_DNA"/>
</dbReference>
<dbReference type="EMBL" id="AE017042">
    <property type="protein sequence ID" value="AAS62706.1"/>
    <property type="status" value="ALT_INIT"/>
    <property type="molecule type" value="Genomic_DNA"/>
</dbReference>
<dbReference type="PIR" id="AH0329">
    <property type="entry name" value="AH0329"/>
</dbReference>
<dbReference type="RefSeq" id="WP_002209663.1">
    <property type="nucleotide sequence ID" value="NZ_WUCM01000006.1"/>
</dbReference>
<dbReference type="RefSeq" id="YP_002347651.1">
    <property type="nucleotide sequence ID" value="NC_003143.1"/>
</dbReference>
<dbReference type="SMR" id="Q8ZD85"/>
<dbReference type="STRING" id="214092.YPO2704"/>
<dbReference type="PaxDb" id="214092-YPO2704"/>
<dbReference type="DNASU" id="1146228"/>
<dbReference type="EnsemblBacteria" id="AAS62706">
    <property type="protein sequence ID" value="AAS62706"/>
    <property type="gene ID" value="YP_2508"/>
</dbReference>
<dbReference type="GeneID" id="57975987"/>
<dbReference type="KEGG" id="ype:YPO2704"/>
<dbReference type="KEGG" id="ypk:y1281"/>
<dbReference type="KEGG" id="ypm:YP_2508"/>
<dbReference type="PATRIC" id="fig|214092.21.peg.3142"/>
<dbReference type="eggNOG" id="COG0692">
    <property type="taxonomic scope" value="Bacteria"/>
</dbReference>
<dbReference type="HOGENOM" id="CLU_032162_3_0_6"/>
<dbReference type="OMA" id="PDNGYLM"/>
<dbReference type="OrthoDB" id="9804372at2"/>
<dbReference type="Proteomes" id="UP000000815">
    <property type="component" value="Chromosome"/>
</dbReference>
<dbReference type="Proteomes" id="UP000001019">
    <property type="component" value="Chromosome"/>
</dbReference>
<dbReference type="Proteomes" id="UP000002490">
    <property type="component" value="Chromosome"/>
</dbReference>
<dbReference type="GO" id="GO:0005737">
    <property type="term" value="C:cytoplasm"/>
    <property type="evidence" value="ECO:0007669"/>
    <property type="project" value="UniProtKB-SubCell"/>
</dbReference>
<dbReference type="GO" id="GO:0004844">
    <property type="term" value="F:uracil DNA N-glycosylase activity"/>
    <property type="evidence" value="ECO:0007669"/>
    <property type="project" value="UniProtKB-UniRule"/>
</dbReference>
<dbReference type="GO" id="GO:0097510">
    <property type="term" value="P:base-excision repair, AP site formation via deaminated base removal"/>
    <property type="evidence" value="ECO:0000318"/>
    <property type="project" value="GO_Central"/>
</dbReference>
<dbReference type="CDD" id="cd10027">
    <property type="entry name" value="UDG-F1-like"/>
    <property type="match status" value="1"/>
</dbReference>
<dbReference type="FunFam" id="3.40.470.10:FF:000001">
    <property type="entry name" value="Uracil-DNA glycosylase"/>
    <property type="match status" value="1"/>
</dbReference>
<dbReference type="Gene3D" id="3.40.470.10">
    <property type="entry name" value="Uracil-DNA glycosylase-like domain"/>
    <property type="match status" value="1"/>
</dbReference>
<dbReference type="HAMAP" id="MF_00148">
    <property type="entry name" value="UDG"/>
    <property type="match status" value="1"/>
</dbReference>
<dbReference type="InterPro" id="IPR002043">
    <property type="entry name" value="UDG_fam1"/>
</dbReference>
<dbReference type="InterPro" id="IPR018085">
    <property type="entry name" value="Ura-DNA_Glyclase_AS"/>
</dbReference>
<dbReference type="InterPro" id="IPR005122">
    <property type="entry name" value="Uracil-DNA_glycosylase-like"/>
</dbReference>
<dbReference type="InterPro" id="IPR036895">
    <property type="entry name" value="Uracil-DNA_glycosylase-like_sf"/>
</dbReference>
<dbReference type="NCBIfam" id="NF003588">
    <property type="entry name" value="PRK05254.1-1"/>
    <property type="match status" value="1"/>
</dbReference>
<dbReference type="NCBIfam" id="NF003589">
    <property type="entry name" value="PRK05254.1-2"/>
    <property type="match status" value="1"/>
</dbReference>
<dbReference type="NCBIfam" id="NF003591">
    <property type="entry name" value="PRK05254.1-4"/>
    <property type="match status" value="1"/>
</dbReference>
<dbReference type="NCBIfam" id="NF003592">
    <property type="entry name" value="PRK05254.1-5"/>
    <property type="match status" value="1"/>
</dbReference>
<dbReference type="NCBIfam" id="TIGR00628">
    <property type="entry name" value="ung"/>
    <property type="match status" value="1"/>
</dbReference>
<dbReference type="PANTHER" id="PTHR11264">
    <property type="entry name" value="URACIL-DNA GLYCOSYLASE"/>
    <property type="match status" value="1"/>
</dbReference>
<dbReference type="PANTHER" id="PTHR11264:SF0">
    <property type="entry name" value="URACIL-DNA GLYCOSYLASE"/>
    <property type="match status" value="1"/>
</dbReference>
<dbReference type="Pfam" id="PF03167">
    <property type="entry name" value="UDG"/>
    <property type="match status" value="1"/>
</dbReference>
<dbReference type="SMART" id="SM00986">
    <property type="entry name" value="UDG"/>
    <property type="match status" value="1"/>
</dbReference>
<dbReference type="SMART" id="SM00987">
    <property type="entry name" value="UreE_C"/>
    <property type="match status" value="1"/>
</dbReference>
<dbReference type="SUPFAM" id="SSF52141">
    <property type="entry name" value="Uracil-DNA glycosylase-like"/>
    <property type="match status" value="1"/>
</dbReference>
<dbReference type="PROSITE" id="PS00130">
    <property type="entry name" value="U_DNA_GLYCOSYLASE"/>
    <property type="match status" value="1"/>
</dbReference>
<proteinExistence type="inferred from homology"/>
<protein>
    <recommendedName>
        <fullName evidence="1">Uracil-DNA glycosylase</fullName>
        <shortName evidence="1">UDG</shortName>
        <ecNumber evidence="1">3.2.2.27</ecNumber>
    </recommendedName>
</protein>
<comment type="function">
    <text evidence="1">Excises uracil residues from the DNA which can arise as a result of misincorporation of dUMP residues by DNA polymerase or due to deamination of cytosine.</text>
</comment>
<comment type="catalytic activity">
    <reaction evidence="1">
        <text>Hydrolyzes single-stranded DNA or mismatched double-stranded DNA and polynucleotides, releasing free uracil.</text>
        <dbReference type="EC" id="3.2.2.27"/>
    </reaction>
</comment>
<comment type="subcellular location">
    <subcellularLocation>
        <location evidence="1">Cytoplasm</location>
    </subcellularLocation>
</comment>
<comment type="similarity">
    <text evidence="1">Belongs to the uracil-DNA glycosylase (UDG) superfamily. UNG family.</text>
</comment>
<comment type="sequence caution" evidence="2">
    <conflict type="erroneous initiation">
        <sequence resource="EMBL-CDS" id="AAM84855"/>
    </conflict>
</comment>
<comment type="sequence caution" evidence="2">
    <conflict type="erroneous initiation">
        <sequence resource="EMBL-CDS" id="AAS62706"/>
    </conflict>
</comment>
<keyword id="KW-0963">Cytoplasm</keyword>
<keyword id="KW-0227">DNA damage</keyword>
<keyword id="KW-0234">DNA repair</keyword>
<keyword id="KW-0378">Hydrolase</keyword>
<keyword id="KW-1185">Reference proteome</keyword>
<feature type="chain" id="PRO_0000176170" description="Uracil-DNA glycosylase">
    <location>
        <begin position="1"/>
        <end position="228"/>
    </location>
</feature>
<feature type="active site" description="Proton acceptor" evidence="1">
    <location>
        <position position="64"/>
    </location>
</feature>
<gene>
    <name evidence="1" type="primary">ung</name>
    <name type="ordered locus">YPO2704</name>
    <name type="ordered locus">y1281</name>
    <name type="ordered locus">YP_2508</name>
</gene>
<name>UNG_YERPE</name>
<reference key="1">
    <citation type="journal article" date="2001" name="Nature">
        <title>Genome sequence of Yersinia pestis, the causative agent of plague.</title>
        <authorList>
            <person name="Parkhill J."/>
            <person name="Wren B.W."/>
            <person name="Thomson N.R."/>
            <person name="Titball R.W."/>
            <person name="Holden M.T.G."/>
            <person name="Prentice M.B."/>
            <person name="Sebaihia M."/>
            <person name="James K.D."/>
            <person name="Churcher C.M."/>
            <person name="Mungall K.L."/>
            <person name="Baker S."/>
            <person name="Basham D."/>
            <person name="Bentley S.D."/>
            <person name="Brooks K."/>
            <person name="Cerdeno-Tarraga A.-M."/>
            <person name="Chillingworth T."/>
            <person name="Cronin A."/>
            <person name="Davies R.M."/>
            <person name="Davis P."/>
            <person name="Dougan G."/>
            <person name="Feltwell T."/>
            <person name="Hamlin N."/>
            <person name="Holroyd S."/>
            <person name="Jagels K."/>
            <person name="Karlyshev A.V."/>
            <person name="Leather S."/>
            <person name="Moule S."/>
            <person name="Oyston P.C.F."/>
            <person name="Quail M.A."/>
            <person name="Rutherford K.M."/>
            <person name="Simmonds M."/>
            <person name="Skelton J."/>
            <person name="Stevens K."/>
            <person name="Whitehead S."/>
            <person name="Barrell B.G."/>
        </authorList>
    </citation>
    <scope>NUCLEOTIDE SEQUENCE [LARGE SCALE GENOMIC DNA]</scope>
    <source>
        <strain>CO-92 / Biovar Orientalis</strain>
    </source>
</reference>
<reference key="2">
    <citation type="journal article" date="2002" name="J. Bacteriol.">
        <title>Genome sequence of Yersinia pestis KIM.</title>
        <authorList>
            <person name="Deng W."/>
            <person name="Burland V."/>
            <person name="Plunkett G. III"/>
            <person name="Boutin A."/>
            <person name="Mayhew G.F."/>
            <person name="Liss P."/>
            <person name="Perna N.T."/>
            <person name="Rose D.J."/>
            <person name="Mau B."/>
            <person name="Zhou S."/>
            <person name="Schwartz D.C."/>
            <person name="Fetherston J.D."/>
            <person name="Lindler L.E."/>
            <person name="Brubaker R.R."/>
            <person name="Plano G.V."/>
            <person name="Straley S.C."/>
            <person name="McDonough K.A."/>
            <person name="Nilles M.L."/>
            <person name="Matson J.S."/>
            <person name="Blattner F.R."/>
            <person name="Perry R.D."/>
        </authorList>
    </citation>
    <scope>NUCLEOTIDE SEQUENCE [LARGE SCALE GENOMIC DNA]</scope>
    <source>
        <strain>KIM10+ / Biovar Mediaevalis</strain>
    </source>
</reference>
<reference key="3">
    <citation type="journal article" date="2004" name="DNA Res.">
        <title>Complete genome sequence of Yersinia pestis strain 91001, an isolate avirulent to humans.</title>
        <authorList>
            <person name="Song Y."/>
            <person name="Tong Z."/>
            <person name="Wang J."/>
            <person name="Wang L."/>
            <person name="Guo Z."/>
            <person name="Han Y."/>
            <person name="Zhang J."/>
            <person name="Pei D."/>
            <person name="Zhou D."/>
            <person name="Qin H."/>
            <person name="Pang X."/>
            <person name="Han Y."/>
            <person name="Zhai J."/>
            <person name="Li M."/>
            <person name="Cui B."/>
            <person name="Qi Z."/>
            <person name="Jin L."/>
            <person name="Dai R."/>
            <person name="Chen F."/>
            <person name="Li S."/>
            <person name="Ye C."/>
            <person name="Du Z."/>
            <person name="Lin W."/>
            <person name="Wang J."/>
            <person name="Yu J."/>
            <person name="Yang H."/>
            <person name="Wang J."/>
            <person name="Huang P."/>
            <person name="Yang R."/>
        </authorList>
    </citation>
    <scope>NUCLEOTIDE SEQUENCE [LARGE SCALE GENOMIC DNA]</scope>
    <source>
        <strain>91001 / Biovar Mediaevalis</strain>
    </source>
</reference>
<accession>Q8ZD85</accession>
<accession>Q0WDI7</accession>